<dbReference type="EMBL" id="AE016853">
    <property type="protein sequence ID" value="AAO57102.1"/>
    <property type="molecule type" value="Genomic_DNA"/>
</dbReference>
<dbReference type="RefSeq" id="NP_793407.1">
    <property type="nucleotide sequence ID" value="NC_004578.1"/>
</dbReference>
<dbReference type="RefSeq" id="WP_005765255.1">
    <property type="nucleotide sequence ID" value="NC_004578.1"/>
</dbReference>
<dbReference type="SMR" id="Q87Z07"/>
<dbReference type="STRING" id="223283.PSPTO_3631"/>
<dbReference type="GeneID" id="1185296"/>
<dbReference type="KEGG" id="pst:PSPTO_3631"/>
<dbReference type="PATRIC" id="fig|223283.9.peg.3719"/>
<dbReference type="eggNOG" id="COG2332">
    <property type="taxonomic scope" value="Bacteria"/>
</dbReference>
<dbReference type="HOGENOM" id="CLU_079503_1_1_6"/>
<dbReference type="OrthoDB" id="9793584at2"/>
<dbReference type="PhylomeDB" id="Q87Z07"/>
<dbReference type="Proteomes" id="UP000002515">
    <property type="component" value="Chromosome"/>
</dbReference>
<dbReference type="GO" id="GO:0005886">
    <property type="term" value="C:plasma membrane"/>
    <property type="evidence" value="ECO:0007669"/>
    <property type="project" value="UniProtKB-SubCell"/>
</dbReference>
<dbReference type="GO" id="GO:0020037">
    <property type="term" value="F:heme binding"/>
    <property type="evidence" value="ECO:0007669"/>
    <property type="project" value="InterPro"/>
</dbReference>
<dbReference type="GO" id="GO:0046872">
    <property type="term" value="F:metal ion binding"/>
    <property type="evidence" value="ECO:0007669"/>
    <property type="project" value="UniProtKB-KW"/>
</dbReference>
<dbReference type="GO" id="GO:0017004">
    <property type="term" value="P:cytochrome complex assembly"/>
    <property type="evidence" value="ECO:0007669"/>
    <property type="project" value="UniProtKB-KW"/>
</dbReference>
<dbReference type="FunFam" id="2.40.50.140:FF:000104">
    <property type="entry name" value="Cytochrome c-type biogenesis protein CcmE"/>
    <property type="match status" value="1"/>
</dbReference>
<dbReference type="Gene3D" id="2.40.50.140">
    <property type="entry name" value="Nucleic acid-binding proteins"/>
    <property type="match status" value="1"/>
</dbReference>
<dbReference type="HAMAP" id="MF_01959">
    <property type="entry name" value="CcmE"/>
    <property type="match status" value="1"/>
</dbReference>
<dbReference type="InterPro" id="IPR004329">
    <property type="entry name" value="CcmE"/>
</dbReference>
<dbReference type="InterPro" id="IPR036127">
    <property type="entry name" value="CcmE-like_sf"/>
</dbReference>
<dbReference type="InterPro" id="IPR012340">
    <property type="entry name" value="NA-bd_OB-fold"/>
</dbReference>
<dbReference type="NCBIfam" id="NF009727">
    <property type="entry name" value="PRK13254.1-1"/>
    <property type="match status" value="1"/>
</dbReference>
<dbReference type="NCBIfam" id="NF009729">
    <property type="entry name" value="PRK13254.1-3"/>
    <property type="match status" value="1"/>
</dbReference>
<dbReference type="NCBIfam" id="NF009731">
    <property type="entry name" value="PRK13254.1-5"/>
    <property type="match status" value="1"/>
</dbReference>
<dbReference type="PANTHER" id="PTHR34128">
    <property type="entry name" value="CYTOCHROME C-TYPE BIOGENESIS PROTEIN CCME HOMOLOG, MITOCHONDRIAL"/>
    <property type="match status" value="1"/>
</dbReference>
<dbReference type="PANTHER" id="PTHR34128:SF2">
    <property type="entry name" value="CYTOCHROME C-TYPE BIOGENESIS PROTEIN CCME HOMOLOG, MITOCHONDRIAL"/>
    <property type="match status" value="1"/>
</dbReference>
<dbReference type="Pfam" id="PF03100">
    <property type="entry name" value="CcmE"/>
    <property type="match status" value="1"/>
</dbReference>
<dbReference type="SUPFAM" id="SSF82093">
    <property type="entry name" value="Heme chaperone CcmE"/>
    <property type="match status" value="1"/>
</dbReference>
<feature type="chain" id="PRO_0000238843" description="Cytochrome c-type biogenesis protein CcmE">
    <location>
        <begin position="1"/>
        <end position="157"/>
    </location>
</feature>
<feature type="topological domain" description="Cytoplasmic" evidence="1">
    <location>
        <begin position="1"/>
        <end position="8"/>
    </location>
</feature>
<feature type="transmembrane region" description="Helical; Signal-anchor for type II membrane protein" evidence="1">
    <location>
        <begin position="9"/>
        <end position="29"/>
    </location>
</feature>
<feature type="topological domain" description="Periplasmic" evidence="1">
    <location>
        <begin position="30"/>
        <end position="157"/>
    </location>
</feature>
<feature type="region of interest" description="Disordered" evidence="2">
    <location>
        <begin position="132"/>
        <end position="157"/>
    </location>
</feature>
<feature type="binding site" description="covalent" evidence="1">
    <location>
        <position position="124"/>
    </location>
    <ligand>
        <name>heme</name>
        <dbReference type="ChEBI" id="CHEBI:30413"/>
    </ligand>
</feature>
<feature type="binding site" description="axial binding residue" evidence="1">
    <location>
        <position position="128"/>
    </location>
    <ligand>
        <name>heme</name>
        <dbReference type="ChEBI" id="CHEBI:30413"/>
    </ligand>
    <ligandPart>
        <name>Fe</name>
        <dbReference type="ChEBI" id="CHEBI:18248"/>
    </ligandPart>
</feature>
<sequence>MNPLRRKRLLIILAVLGGVGLALTLALSALKENINLFYTPSQIANGQAPLGTRIRAGGMVEKGSLQRSTDSLDVRFVVTDFNKSVTIAYRGILPDLFREGQGIVALGKLDAQGVVVADEVLAKHDEKYMPPEVSKALRESGQATPAPASMPARQADR</sequence>
<gene>
    <name evidence="1" type="primary">ccmE</name>
    <name evidence="1" type="synonym">cycJ</name>
    <name type="ordered locus">PSPTO_3631</name>
</gene>
<comment type="function">
    <text evidence="1">Heme chaperone required for the biogenesis of c-type cytochromes. Transiently binds heme delivered by CcmC and transfers the heme to apo-cytochromes in a process facilitated by CcmF and CcmH.</text>
</comment>
<comment type="subcellular location">
    <subcellularLocation>
        <location evidence="1">Cell inner membrane</location>
        <topology evidence="1">Single-pass type II membrane protein</topology>
        <orientation evidence="1">Periplasmic side</orientation>
    </subcellularLocation>
</comment>
<comment type="similarity">
    <text evidence="1">Belongs to the CcmE/CycJ family.</text>
</comment>
<accession>Q87Z07</accession>
<evidence type="ECO:0000255" key="1">
    <source>
        <dbReference type="HAMAP-Rule" id="MF_01959"/>
    </source>
</evidence>
<evidence type="ECO:0000256" key="2">
    <source>
        <dbReference type="SAM" id="MobiDB-lite"/>
    </source>
</evidence>
<keyword id="KW-0997">Cell inner membrane</keyword>
<keyword id="KW-1003">Cell membrane</keyword>
<keyword id="KW-0201">Cytochrome c-type biogenesis</keyword>
<keyword id="KW-0349">Heme</keyword>
<keyword id="KW-0408">Iron</keyword>
<keyword id="KW-0472">Membrane</keyword>
<keyword id="KW-0479">Metal-binding</keyword>
<keyword id="KW-1185">Reference proteome</keyword>
<keyword id="KW-0735">Signal-anchor</keyword>
<keyword id="KW-0812">Transmembrane</keyword>
<keyword id="KW-1133">Transmembrane helix</keyword>
<protein>
    <recommendedName>
        <fullName evidence="1">Cytochrome c-type biogenesis protein CcmE</fullName>
    </recommendedName>
    <alternativeName>
        <fullName evidence="1">Cytochrome c maturation protein E</fullName>
    </alternativeName>
    <alternativeName>
        <fullName evidence="1">Heme chaperone CcmE</fullName>
    </alternativeName>
</protein>
<reference key="1">
    <citation type="journal article" date="2003" name="Proc. Natl. Acad. Sci. U.S.A.">
        <title>The complete genome sequence of the Arabidopsis and tomato pathogen Pseudomonas syringae pv. tomato DC3000.</title>
        <authorList>
            <person name="Buell C.R."/>
            <person name="Joardar V."/>
            <person name="Lindeberg M."/>
            <person name="Selengut J."/>
            <person name="Paulsen I.T."/>
            <person name="Gwinn M.L."/>
            <person name="Dodson R.J."/>
            <person name="DeBoy R.T."/>
            <person name="Durkin A.S."/>
            <person name="Kolonay J.F."/>
            <person name="Madupu R."/>
            <person name="Daugherty S.C."/>
            <person name="Brinkac L.M."/>
            <person name="Beanan M.J."/>
            <person name="Haft D.H."/>
            <person name="Nelson W.C."/>
            <person name="Davidsen T.M."/>
            <person name="Zafar N."/>
            <person name="Zhou L."/>
            <person name="Liu J."/>
            <person name="Yuan Q."/>
            <person name="Khouri H.M."/>
            <person name="Fedorova N.B."/>
            <person name="Tran B."/>
            <person name="Russell D."/>
            <person name="Berry K.J."/>
            <person name="Utterback T.R."/>
            <person name="Van Aken S.E."/>
            <person name="Feldblyum T.V."/>
            <person name="D'Ascenzo M."/>
            <person name="Deng W.-L."/>
            <person name="Ramos A.R."/>
            <person name="Alfano J.R."/>
            <person name="Cartinhour S."/>
            <person name="Chatterjee A.K."/>
            <person name="Delaney T.P."/>
            <person name="Lazarowitz S.G."/>
            <person name="Martin G.B."/>
            <person name="Schneider D.J."/>
            <person name="Tang X."/>
            <person name="Bender C.L."/>
            <person name="White O."/>
            <person name="Fraser C.M."/>
            <person name="Collmer A."/>
        </authorList>
    </citation>
    <scope>NUCLEOTIDE SEQUENCE [LARGE SCALE GENOMIC DNA]</scope>
    <source>
        <strain>ATCC BAA-871 / DC3000</strain>
    </source>
</reference>
<proteinExistence type="inferred from homology"/>
<name>CCME_PSESM</name>
<organism>
    <name type="scientific">Pseudomonas syringae pv. tomato (strain ATCC BAA-871 / DC3000)</name>
    <dbReference type="NCBI Taxonomy" id="223283"/>
    <lineage>
        <taxon>Bacteria</taxon>
        <taxon>Pseudomonadati</taxon>
        <taxon>Pseudomonadota</taxon>
        <taxon>Gammaproteobacteria</taxon>
        <taxon>Pseudomonadales</taxon>
        <taxon>Pseudomonadaceae</taxon>
        <taxon>Pseudomonas</taxon>
    </lineage>
</organism>